<evidence type="ECO:0000255" key="1">
    <source>
        <dbReference type="HAMAP-Rule" id="MF_00674"/>
    </source>
</evidence>
<comment type="similarity">
    <text evidence="1">Belongs to the UPF0251 family.</text>
</comment>
<feature type="chain" id="PRO_1000044754" description="UPF0251 protein Sbal_3699">
    <location>
        <begin position="1"/>
        <end position="98"/>
    </location>
</feature>
<name>Y3699_SHEB5</name>
<accession>A3D8W0</accession>
<protein>
    <recommendedName>
        <fullName evidence="1">UPF0251 protein Sbal_3699</fullName>
    </recommendedName>
</protein>
<gene>
    <name type="ordered locus">Sbal_3699</name>
</gene>
<sequence length="98" mass="10707">MPRPKKCRQLSSCAPCSLFKPNGIPAVELTHIQLEADEFEALELGDVKRLSQIEAAALMGISRQTFGYLLANARKKVATAITQGQALRLPTPKDKDLS</sequence>
<keyword id="KW-1185">Reference proteome</keyword>
<organism>
    <name type="scientific">Shewanella baltica (strain OS155 / ATCC BAA-1091)</name>
    <dbReference type="NCBI Taxonomy" id="325240"/>
    <lineage>
        <taxon>Bacteria</taxon>
        <taxon>Pseudomonadati</taxon>
        <taxon>Pseudomonadota</taxon>
        <taxon>Gammaproteobacteria</taxon>
        <taxon>Alteromonadales</taxon>
        <taxon>Shewanellaceae</taxon>
        <taxon>Shewanella</taxon>
    </lineage>
</organism>
<reference key="1">
    <citation type="submission" date="2007-02" db="EMBL/GenBank/DDBJ databases">
        <title>Complete sequence of chromosome of Shewanella baltica OS155.</title>
        <authorList>
            <consortium name="US DOE Joint Genome Institute"/>
            <person name="Copeland A."/>
            <person name="Lucas S."/>
            <person name="Lapidus A."/>
            <person name="Barry K."/>
            <person name="Detter J.C."/>
            <person name="Glavina del Rio T."/>
            <person name="Hammon N."/>
            <person name="Israni S."/>
            <person name="Dalin E."/>
            <person name="Tice H."/>
            <person name="Pitluck S."/>
            <person name="Sims D.R."/>
            <person name="Brettin T."/>
            <person name="Bruce D."/>
            <person name="Han C."/>
            <person name="Tapia R."/>
            <person name="Brainard J."/>
            <person name="Schmutz J."/>
            <person name="Larimer F."/>
            <person name="Land M."/>
            <person name="Hauser L."/>
            <person name="Kyrpides N."/>
            <person name="Mikhailova N."/>
            <person name="Brettar I."/>
            <person name="Klappenbach J."/>
            <person name="Konstantinidis K."/>
            <person name="Rodrigues J."/>
            <person name="Tiedje J."/>
            <person name="Richardson P."/>
        </authorList>
    </citation>
    <scope>NUCLEOTIDE SEQUENCE [LARGE SCALE GENOMIC DNA]</scope>
    <source>
        <strain>OS155 / ATCC BAA-1091</strain>
    </source>
</reference>
<dbReference type="EMBL" id="CP000563">
    <property type="protein sequence ID" value="ABN63173.1"/>
    <property type="molecule type" value="Genomic_DNA"/>
</dbReference>
<dbReference type="RefSeq" id="WP_011847842.1">
    <property type="nucleotide sequence ID" value="NC_009052.1"/>
</dbReference>
<dbReference type="SMR" id="A3D8W0"/>
<dbReference type="STRING" id="325240.Sbal_3699"/>
<dbReference type="KEGG" id="sbl:Sbal_3699"/>
<dbReference type="HOGENOM" id="CLU_094511_2_1_6"/>
<dbReference type="OrthoDB" id="280278at2"/>
<dbReference type="Proteomes" id="UP000001557">
    <property type="component" value="Chromosome"/>
</dbReference>
<dbReference type="Gene3D" id="1.10.10.10">
    <property type="entry name" value="Winged helix-like DNA-binding domain superfamily/Winged helix DNA-binding domain"/>
    <property type="match status" value="1"/>
</dbReference>
<dbReference type="HAMAP" id="MF_00674">
    <property type="entry name" value="UPF0251"/>
    <property type="match status" value="1"/>
</dbReference>
<dbReference type="InterPro" id="IPR013324">
    <property type="entry name" value="RNA_pol_sigma_r3/r4-like"/>
</dbReference>
<dbReference type="InterPro" id="IPR002852">
    <property type="entry name" value="UPF0251"/>
</dbReference>
<dbReference type="InterPro" id="IPR036388">
    <property type="entry name" value="WH-like_DNA-bd_sf"/>
</dbReference>
<dbReference type="PANTHER" id="PTHR37478">
    <property type="match status" value="1"/>
</dbReference>
<dbReference type="PANTHER" id="PTHR37478:SF2">
    <property type="entry name" value="UPF0251 PROTEIN TK0562"/>
    <property type="match status" value="1"/>
</dbReference>
<dbReference type="Pfam" id="PF02001">
    <property type="entry name" value="DUF134"/>
    <property type="match status" value="1"/>
</dbReference>
<dbReference type="SUPFAM" id="SSF88659">
    <property type="entry name" value="Sigma3 and sigma4 domains of RNA polymerase sigma factors"/>
    <property type="match status" value="1"/>
</dbReference>
<proteinExistence type="inferred from homology"/>